<name>PRXV_ASCNO</name>
<proteinExistence type="evidence at protein level"/>
<feature type="chain" id="PRO_0000207068" description="Vanadium-dependent bromoperoxidase">
    <location>
        <begin position="1"/>
        <end position="557"/>
    </location>
</feature>
<feature type="region of interest" description="Disordered" evidence="1">
    <location>
        <begin position="1"/>
        <end position="22"/>
    </location>
</feature>
<feature type="active site">
    <location>
        <position position="411"/>
    </location>
</feature>
<feature type="active site">
    <location>
        <position position="418"/>
    </location>
</feature>
<feature type="binding site" evidence="2 5">
    <location>
        <position position="341"/>
    </location>
    <ligand>
        <name>vanadate</name>
        <dbReference type="ChEBI" id="CHEBI:35169"/>
    </ligand>
</feature>
<feature type="binding site" evidence="2 5">
    <location>
        <position position="349"/>
    </location>
    <ligand>
        <name>vanadate</name>
        <dbReference type="ChEBI" id="CHEBI:35169"/>
    </ligand>
</feature>
<feature type="binding site" evidence="2 5">
    <location>
        <position position="416"/>
    </location>
    <ligand>
        <name>vanadate</name>
        <dbReference type="ChEBI" id="CHEBI:35169"/>
    </ligand>
</feature>
<feature type="binding site" evidence="2 5">
    <location>
        <position position="417"/>
    </location>
    <ligand>
        <name>vanadate</name>
        <dbReference type="ChEBI" id="CHEBI:35169"/>
    </ligand>
</feature>
<feature type="binding site" evidence="2 5">
    <location>
        <position position="418"/>
    </location>
    <ligand>
        <name>vanadate</name>
        <dbReference type="ChEBI" id="CHEBI:35169"/>
    </ligand>
</feature>
<feature type="binding site" evidence="2 5">
    <location>
        <position position="480"/>
    </location>
    <ligand>
        <name>vanadate</name>
        <dbReference type="ChEBI" id="CHEBI:35169"/>
    </ligand>
</feature>
<feature type="binding site" evidence="2 5">
    <location>
        <position position="486"/>
    </location>
    <ligand>
        <name>vanadate</name>
        <dbReference type="ChEBI" id="CHEBI:35169"/>
    </ligand>
</feature>
<feature type="modified residue" description="Pyrrolidone carboxylic acid" evidence="2">
    <location>
        <position position="1"/>
    </location>
</feature>
<feature type="disulfide bond" description="Interchain (with C-41)">
    <location>
        <position position="3"/>
    </location>
</feature>
<feature type="disulfide bond" description="Interchain (with C-3)">
    <location>
        <position position="41"/>
    </location>
</feature>
<feature type="disulfide bond">
    <location>
        <begin position="77"/>
        <end position="86"/>
    </location>
</feature>
<feature type="disulfide bond">
    <location>
        <begin position="441"/>
        <end position="462"/>
    </location>
</feature>
<feature type="disulfide bond">
    <location>
        <begin position="544"/>
        <end position="555"/>
    </location>
</feature>
<feature type="sequence conflict" description="In Ref. 2; AA sequence." evidence="4" ref="2">
    <original>S</original>
    <variation>D</variation>
    <location>
        <position position="321"/>
    </location>
</feature>
<feature type="sequence conflict" description="In Ref. 2; AA sequence." evidence="4" ref="2">
    <original>K</original>
    <variation>N</variation>
    <location>
        <position position="341"/>
    </location>
</feature>
<feature type="sequence conflict" description="In Ref. 2; AA sequence." evidence="4" ref="2">
    <original>AI</original>
    <variation>VY</variation>
    <location>
        <begin position="403"/>
        <end position="404"/>
    </location>
</feature>
<feature type="sequence conflict" description="In Ref. 2; AA sequence." evidence="4" ref="2">
    <original>GS</original>
    <variation>T</variation>
    <location>
        <begin position="407"/>
        <end position="408"/>
    </location>
</feature>
<feature type="sequence conflict" description="In Ref. 2; AA sequence." evidence="4" ref="2">
    <original>P</original>
    <variation>S</variation>
    <location>
        <position position="409"/>
    </location>
</feature>
<feature type="sequence conflict" description="In Ref. 2; AA sequence." evidence="4" ref="2">
    <original>CYPD</original>
    <variation>AIR</variation>
    <location>
        <begin position="441"/>
        <end position="444"/>
    </location>
</feature>
<feature type="sequence conflict" description="In Ref. 2; AA sequence." evidence="4" ref="2">
    <original>N</original>
    <variation>K</variation>
    <location>
        <position position="470"/>
    </location>
</feature>
<feature type="helix" evidence="6">
    <location>
        <begin position="15"/>
        <end position="37"/>
    </location>
</feature>
<feature type="helix" evidence="6">
    <location>
        <begin position="50"/>
        <end position="52"/>
    </location>
</feature>
<feature type="helix" evidence="6">
    <location>
        <begin position="68"/>
        <end position="80"/>
    </location>
</feature>
<feature type="helix" evidence="6">
    <location>
        <begin position="83"/>
        <end position="86"/>
    </location>
</feature>
<feature type="helix" evidence="6">
    <location>
        <begin position="98"/>
        <end position="100"/>
    </location>
</feature>
<feature type="strand" evidence="6">
    <location>
        <begin position="101"/>
        <end position="103"/>
    </location>
</feature>
<feature type="turn" evidence="6">
    <location>
        <begin position="105"/>
        <end position="108"/>
    </location>
</feature>
<feature type="strand" evidence="6">
    <location>
        <begin position="113"/>
        <end position="116"/>
    </location>
</feature>
<feature type="helix" evidence="6">
    <location>
        <begin position="132"/>
        <end position="147"/>
    </location>
</feature>
<feature type="helix" evidence="6">
    <location>
        <begin position="152"/>
        <end position="154"/>
    </location>
</feature>
<feature type="turn" evidence="6">
    <location>
        <begin position="155"/>
        <end position="157"/>
    </location>
</feature>
<feature type="helix" evidence="6">
    <location>
        <begin position="159"/>
        <end position="169"/>
    </location>
</feature>
<feature type="helix" evidence="6">
    <location>
        <begin position="174"/>
        <end position="176"/>
    </location>
</feature>
<feature type="helix" evidence="6">
    <location>
        <begin position="190"/>
        <end position="193"/>
    </location>
</feature>
<feature type="turn" evidence="6">
    <location>
        <begin position="200"/>
        <end position="202"/>
    </location>
</feature>
<feature type="strand" evidence="6">
    <location>
        <begin position="203"/>
        <end position="205"/>
    </location>
</feature>
<feature type="helix" evidence="6">
    <location>
        <begin position="210"/>
        <end position="213"/>
    </location>
</feature>
<feature type="strand" evidence="6">
    <location>
        <begin position="216"/>
        <end position="218"/>
    </location>
</feature>
<feature type="strand" evidence="6">
    <location>
        <begin position="221"/>
        <end position="223"/>
    </location>
</feature>
<feature type="helix" evidence="6">
    <location>
        <begin position="240"/>
        <end position="247"/>
    </location>
</feature>
<feature type="helix" evidence="6">
    <location>
        <begin position="268"/>
        <end position="276"/>
    </location>
</feature>
<feature type="helix" evidence="6">
    <location>
        <begin position="282"/>
        <end position="293"/>
    </location>
</feature>
<feature type="helix" evidence="6">
    <location>
        <begin position="304"/>
        <end position="308"/>
    </location>
</feature>
<feature type="strand" evidence="6">
    <location>
        <begin position="310"/>
        <end position="313"/>
    </location>
</feature>
<feature type="helix" evidence="6">
    <location>
        <begin position="320"/>
        <end position="329"/>
    </location>
</feature>
<feature type="helix" evidence="6">
    <location>
        <begin position="330"/>
        <end position="333"/>
    </location>
</feature>
<feature type="helix" evidence="6">
    <location>
        <begin position="334"/>
        <end position="342"/>
    </location>
</feature>
<feature type="turn" evidence="6">
    <location>
        <begin position="343"/>
        <end position="345"/>
    </location>
</feature>
<feature type="helix" evidence="6">
    <location>
        <begin position="350"/>
        <end position="361"/>
    </location>
</feature>
<feature type="helix" evidence="6">
    <location>
        <begin position="371"/>
        <end position="374"/>
    </location>
</feature>
<feature type="helix" evidence="6">
    <location>
        <begin position="377"/>
        <end position="390"/>
    </location>
</feature>
<feature type="helix" evidence="6">
    <location>
        <begin position="392"/>
        <end position="394"/>
    </location>
</feature>
<feature type="strand" evidence="6">
    <location>
        <begin position="402"/>
        <end position="404"/>
    </location>
</feature>
<feature type="strand" evidence="6">
    <location>
        <begin position="413"/>
        <end position="415"/>
    </location>
</feature>
<feature type="helix" evidence="6">
    <location>
        <begin position="417"/>
        <end position="433"/>
    </location>
</feature>
<feature type="helix" evidence="6">
    <location>
        <begin position="435"/>
        <end position="438"/>
    </location>
</feature>
<feature type="strand" evidence="6">
    <location>
        <begin position="446"/>
        <end position="448"/>
    </location>
</feature>
<feature type="strand" evidence="6">
    <location>
        <begin position="452"/>
        <end position="457"/>
    </location>
</feature>
<feature type="helix" evidence="6">
    <location>
        <begin position="465"/>
        <end position="482"/>
    </location>
</feature>
<feature type="helix" evidence="6">
    <location>
        <begin position="488"/>
        <end position="512"/>
    </location>
</feature>
<feature type="strand" evidence="6">
    <location>
        <begin position="518"/>
        <end position="522"/>
    </location>
</feature>
<feature type="strand" evidence="6">
    <location>
        <begin position="528"/>
        <end position="532"/>
    </location>
</feature>
<feature type="strand" evidence="6">
    <location>
        <begin position="537"/>
        <end position="539"/>
    </location>
</feature>
<feature type="strand" evidence="6">
    <location>
        <begin position="545"/>
        <end position="548"/>
    </location>
</feature>
<feature type="helix" evidence="6">
    <location>
        <begin position="552"/>
        <end position="554"/>
    </location>
</feature>
<comment type="function">
    <text evidence="2 3">Catalyzes the halogenation of organic substrates in the presence of hydrogen peroxide.</text>
</comment>
<comment type="catalytic activity">
    <reaction evidence="4">
        <text>RH + Br(-) + H2O2 = RBr + 2 H2O.</text>
        <dbReference type="EC" id="1.11.1.18"/>
    </reaction>
</comment>
<comment type="cofactor">
    <cofactor evidence="2">
        <name>vanadate</name>
        <dbReference type="ChEBI" id="CHEBI:35169"/>
    </cofactor>
    <text evidence="2">Binds 1 vanadate ion per subunit.</text>
</comment>
<comment type="subunit">
    <text evidence="2">Homodimer; disulfide-linked.</text>
</comment>
<comment type="similarity">
    <text evidence="4">Belongs to the vanadium-dependent haloperoxidase family.</text>
</comment>
<dbReference type="EC" id="1.11.1.18"/>
<dbReference type="PDB" id="1QI9">
    <property type="method" value="X-ray"/>
    <property type="resolution" value="2.05 A"/>
    <property type="chains" value="A/B=2-556"/>
</dbReference>
<dbReference type="PDBsum" id="1QI9"/>
<dbReference type="SMR" id="P81701"/>
<dbReference type="PeroxiBase" id="5895">
    <property type="entry name" value="AnoVBPo"/>
</dbReference>
<dbReference type="BRENDA" id="1.11.1.18">
    <property type="organism ID" value="8891"/>
</dbReference>
<dbReference type="EvolutionaryTrace" id="P81701"/>
<dbReference type="GO" id="GO:0019806">
    <property type="term" value="F:bromide peroxidase activity"/>
    <property type="evidence" value="ECO:0007669"/>
    <property type="project" value="UniProtKB-EC"/>
</dbReference>
<dbReference type="GO" id="GO:0046872">
    <property type="term" value="F:metal ion binding"/>
    <property type="evidence" value="ECO:0007669"/>
    <property type="project" value="UniProtKB-KW"/>
</dbReference>
<dbReference type="CDD" id="cd03398">
    <property type="entry name" value="PAP2_haloperoxidase"/>
    <property type="match status" value="1"/>
</dbReference>
<dbReference type="Gene3D" id="1.10.606.10">
    <property type="entry name" value="Vanadium-containing Chloroperoxidase, domain 2"/>
    <property type="match status" value="1"/>
</dbReference>
<dbReference type="InterPro" id="IPR016119">
    <property type="entry name" value="Br/Cl_peroxidase_C"/>
</dbReference>
<dbReference type="InterPro" id="IPR036938">
    <property type="entry name" value="P_Acid_Pase_2/haloperoxi_sf"/>
</dbReference>
<dbReference type="InterPro" id="IPR052559">
    <property type="entry name" value="V-haloperoxidase"/>
</dbReference>
<dbReference type="PANTHER" id="PTHR34599">
    <property type="entry name" value="PEROXIDASE-RELATED"/>
    <property type="match status" value="1"/>
</dbReference>
<dbReference type="PANTHER" id="PTHR34599:SF1">
    <property type="entry name" value="PHOSPHATIDIC ACID PHOSPHATASE TYPE 2_HALOPEROXIDASE DOMAIN-CONTAINING PROTEIN"/>
    <property type="match status" value="1"/>
</dbReference>
<dbReference type="SUPFAM" id="SSF48317">
    <property type="entry name" value="Acid phosphatase/Vanadium-dependent haloperoxidase"/>
    <property type="match status" value="1"/>
</dbReference>
<protein>
    <recommendedName>
        <fullName>Vanadium-dependent bromoperoxidase</fullName>
        <shortName>V-BPO</shortName>
        <ecNumber>1.11.1.18</ecNumber>
    </recommendedName>
    <alternativeName>
        <fullName>Vanadium haloperoxidase</fullName>
    </alternativeName>
</protein>
<organism>
    <name type="scientific">Ascophyllum nodosum</name>
    <name type="common">Knotted wrack</name>
    <name type="synonym">Brown seaweed</name>
    <dbReference type="NCBI Taxonomy" id="52969"/>
    <lineage>
        <taxon>Eukaryota</taxon>
        <taxon>Sar</taxon>
        <taxon>Stramenopiles</taxon>
        <taxon>Ochrophyta</taxon>
        <taxon>PX clade</taxon>
        <taxon>Phaeophyceae</taxon>
        <taxon>Fucales</taxon>
        <taxon>Fucaceae</taxon>
        <taxon>Ascophyllum</taxon>
    </lineage>
</organism>
<evidence type="ECO:0000256" key="1">
    <source>
        <dbReference type="SAM" id="MobiDB-lite"/>
    </source>
</evidence>
<evidence type="ECO:0000269" key="2">
    <source>
    </source>
</evidence>
<evidence type="ECO:0000269" key="3">
    <source>
    </source>
</evidence>
<evidence type="ECO:0000305" key="4"/>
<evidence type="ECO:0007744" key="5">
    <source>
        <dbReference type="PDB" id="1QI9"/>
    </source>
</evidence>
<evidence type="ECO:0007829" key="6">
    <source>
        <dbReference type="PDB" id="1QI9"/>
    </source>
</evidence>
<accession>P81701</accession>
<keyword id="KW-0002">3D-structure</keyword>
<keyword id="KW-0903">Direct protein sequencing</keyword>
<keyword id="KW-1015">Disulfide bond</keyword>
<keyword id="KW-0479">Metal-binding</keyword>
<keyword id="KW-0560">Oxidoreductase</keyword>
<keyword id="KW-0575">Peroxidase</keyword>
<keyword id="KW-0873">Pyrrolidone carboxylic acid</keyword>
<keyword id="KW-0837">Vanadium</keyword>
<reference evidence="5" key="1">
    <citation type="journal article" date="1999" name="J. Mol. Biol.">
        <title>X-ray structure determination of a vanadium-dependent haloperoxidase from Ascophyllum nodosum at 2.0-A resolution.</title>
        <authorList>
            <person name="Weyand M."/>
            <person name="Hecht H.-J."/>
            <person name="Kiess M."/>
            <person name="Liaud M.-F."/>
            <person name="Vilter H."/>
            <person name="Schomburg D."/>
        </authorList>
    </citation>
    <scope>PROTEIN SEQUENCE</scope>
    <scope>X-RAY CRYSTALLOGRAPHY (2.0 ANGSTROMS) IN COMPLEX WITH VANADATE</scope>
    <scope>PYROGLUTAMATE FORMATION AT GLN-1</scope>
    <scope>COFACTOR</scope>
    <scope>FUNCTION</scope>
    <scope>SUBUNIT</scope>
    <scope>REACTION MECHANISM</scope>
</reference>
<reference key="2">
    <citation type="journal article" date="1995" name="Met. Ions Biol. Syst.">
        <title>Vanadium-dependent haloperoxidases.</title>
        <authorList>
            <person name="Vilter H."/>
        </authorList>
    </citation>
    <scope>NUCLEOTIDE SEQUENCE OF 320-556</scope>
    <scope>PROTEIN SEQUENCE OF 326-341; 383-426; 471-479 AND 481-556</scope>
    <scope>FUNCTION</scope>
</reference>
<sequence length="557" mass="60344">QTCSTSDDADDPTPPNERDDEAFASRVAAAKRELEGTGTVCQINNGETDLAAKFHKSLPHDDLGQVDADAFAALEDCILNGDLSICEDVPVGNSEGDPVGRLVNPTAAFAIDISGPAFSATTIPPVPTLPSPELAAQLAEVYWMALARDVPFMQYGTDDITVTAAANLAGMEGFPNLDAVSIGSDGTVDPLSQLFRATFVGVETGPFISQLLVNSFTIDSITVEPKQETFAPDVNYMVDFDEWLNIQNGGPPAGPELLDDELRFVRNARDLARVTFTDNINTEAYRGALILLGLDAFNRAGVNGPFIDIDRQAGFVNFGISHYFRLIGAAELAQRSSWYQKWQVHRFARPEALGGTLHLTIKGELNADFDLSLLENAELLKRVAAINAAQNPNNEVTYLLPQAIQEGSPTHPSYPSGHATQNGAFATVLKALIGLDRGGDCYPDPVYPDDDGLKLIDFRGSCLTFEGEINKLAVNVAFGRQMLGIHYRFDGIQGLLLGETITVRTLHQELMTFAEESTFEFRLFTGEVIKLFQDGTFTIDGFKCPGLVYTGVENCVS</sequence>